<proteinExistence type="inferred from homology"/>
<protein>
    <recommendedName>
        <fullName evidence="1">UPF0502 protein YpsIP31758_2048</fullName>
    </recommendedName>
</protein>
<comment type="similarity">
    <text evidence="1">Belongs to the UPF0502 family.</text>
</comment>
<evidence type="ECO:0000255" key="1">
    <source>
        <dbReference type="HAMAP-Rule" id="MF_01584"/>
    </source>
</evidence>
<reference key="1">
    <citation type="journal article" date="2007" name="PLoS Genet.">
        <title>The complete genome sequence of Yersinia pseudotuberculosis IP31758, the causative agent of Far East scarlet-like fever.</title>
        <authorList>
            <person name="Eppinger M."/>
            <person name="Rosovitz M.J."/>
            <person name="Fricke W.F."/>
            <person name="Rasko D.A."/>
            <person name="Kokorina G."/>
            <person name="Fayolle C."/>
            <person name="Lindler L.E."/>
            <person name="Carniel E."/>
            <person name="Ravel J."/>
        </authorList>
    </citation>
    <scope>NUCLEOTIDE SEQUENCE [LARGE SCALE GENOMIC DNA]</scope>
    <source>
        <strain>IP 31758</strain>
    </source>
</reference>
<feature type="chain" id="PRO_1000069307" description="UPF0502 protein YpsIP31758_2048">
    <location>
        <begin position="1"/>
        <end position="233"/>
    </location>
</feature>
<dbReference type="EMBL" id="CP000720">
    <property type="protein sequence ID" value="ABS49123.1"/>
    <property type="molecule type" value="Genomic_DNA"/>
</dbReference>
<dbReference type="RefSeq" id="WP_011192403.1">
    <property type="nucleotide sequence ID" value="NC_009708.1"/>
</dbReference>
<dbReference type="SMR" id="A7FIE3"/>
<dbReference type="KEGG" id="ypi:YpsIP31758_2048"/>
<dbReference type="HOGENOM" id="CLU_057831_2_0_6"/>
<dbReference type="Proteomes" id="UP000002412">
    <property type="component" value="Chromosome"/>
</dbReference>
<dbReference type="Gene3D" id="1.10.10.10">
    <property type="entry name" value="Winged helix-like DNA-binding domain superfamily/Winged helix DNA-binding domain"/>
    <property type="match status" value="2"/>
</dbReference>
<dbReference type="HAMAP" id="MF_01584">
    <property type="entry name" value="UPF0502"/>
    <property type="match status" value="1"/>
</dbReference>
<dbReference type="InterPro" id="IPR007432">
    <property type="entry name" value="DUF480"/>
</dbReference>
<dbReference type="InterPro" id="IPR036388">
    <property type="entry name" value="WH-like_DNA-bd_sf"/>
</dbReference>
<dbReference type="InterPro" id="IPR036390">
    <property type="entry name" value="WH_DNA-bd_sf"/>
</dbReference>
<dbReference type="NCBIfam" id="NF008413">
    <property type="entry name" value="PRK11239.1"/>
    <property type="match status" value="1"/>
</dbReference>
<dbReference type="PANTHER" id="PTHR38768">
    <property type="entry name" value="UPF0502 PROTEIN YCEH"/>
    <property type="match status" value="1"/>
</dbReference>
<dbReference type="PANTHER" id="PTHR38768:SF1">
    <property type="entry name" value="UPF0502 PROTEIN YCEH"/>
    <property type="match status" value="1"/>
</dbReference>
<dbReference type="Pfam" id="PF04337">
    <property type="entry name" value="DUF480"/>
    <property type="match status" value="1"/>
</dbReference>
<dbReference type="SUPFAM" id="SSF46785">
    <property type="entry name" value="Winged helix' DNA-binding domain"/>
    <property type="match status" value="2"/>
</dbReference>
<name>Y2048_YERP3</name>
<gene>
    <name type="ordered locus">YpsIP31758_2048</name>
</gene>
<accession>A7FIE3</accession>
<organism>
    <name type="scientific">Yersinia pseudotuberculosis serotype O:1b (strain IP 31758)</name>
    <dbReference type="NCBI Taxonomy" id="349747"/>
    <lineage>
        <taxon>Bacteria</taxon>
        <taxon>Pseudomonadati</taxon>
        <taxon>Pseudomonadota</taxon>
        <taxon>Gammaproteobacteria</taxon>
        <taxon>Enterobacterales</taxon>
        <taxon>Yersiniaceae</taxon>
        <taxon>Yersinia</taxon>
    </lineage>
</organism>
<sequence>MKHNLNAHEARVIGCLLEKQVTTPEQYPMSLNGLTLACNQKTSRDPVMELSESQVQQTLDFLLKKHLIRSQSGNRVMKYEHRFCNSEFGDLKFSPAEVAVITLLLLRGAQTPGELRTRTNRMYEFADVAETEETLKTLSLREDGPFVVRLAREPGKRESRFMPLFSGDVASSLLAAGEAEENNHTLEANPRETHSFENIALEKTALEARVAQLEQQVIQLSRRLDDVLIQLDD</sequence>